<gene>
    <name evidence="1" type="primary">rplX</name>
    <name type="ordered locus">MLBr01848</name>
</gene>
<sequence>MKVHKGDTVLVIAGKDKGAKGKVLQAYPARNRVLVEGVNRIKKHTAISANQRGAQAGGIVTQEAPIHVSNVMVVDSDGKPTRIGYRVDEETDKRVRISKRNGKDI</sequence>
<protein>
    <recommendedName>
        <fullName evidence="1">Large ribosomal subunit protein uL24</fullName>
    </recommendedName>
    <alternativeName>
        <fullName evidence="2">50S ribosomal protein L24</fullName>
    </alternativeName>
</protein>
<organism>
    <name type="scientific">Mycobacterium leprae (strain Br4923)</name>
    <dbReference type="NCBI Taxonomy" id="561304"/>
    <lineage>
        <taxon>Bacteria</taxon>
        <taxon>Bacillati</taxon>
        <taxon>Actinomycetota</taxon>
        <taxon>Actinomycetes</taxon>
        <taxon>Mycobacteriales</taxon>
        <taxon>Mycobacteriaceae</taxon>
        <taxon>Mycobacterium</taxon>
    </lineage>
</organism>
<evidence type="ECO:0000255" key="1">
    <source>
        <dbReference type="HAMAP-Rule" id="MF_01326"/>
    </source>
</evidence>
<evidence type="ECO:0000305" key="2"/>
<feature type="chain" id="PRO_1000165957" description="Large ribosomal subunit protein uL24">
    <location>
        <begin position="1"/>
        <end position="105"/>
    </location>
</feature>
<proteinExistence type="inferred from homology"/>
<name>RL24_MYCLB</name>
<comment type="function">
    <text evidence="1">One of two assembly initiator proteins, it binds directly to the 5'-end of the 23S rRNA, where it nucleates assembly of the 50S subunit.</text>
</comment>
<comment type="function">
    <text evidence="1">One of the proteins that surrounds the polypeptide exit tunnel on the outside of the subunit.</text>
</comment>
<comment type="subunit">
    <text evidence="1">Part of the 50S ribosomal subunit.</text>
</comment>
<comment type="similarity">
    <text evidence="1">Belongs to the universal ribosomal protein uL24 family.</text>
</comment>
<keyword id="KW-0687">Ribonucleoprotein</keyword>
<keyword id="KW-0689">Ribosomal protein</keyword>
<keyword id="KW-0694">RNA-binding</keyword>
<keyword id="KW-0699">rRNA-binding</keyword>
<dbReference type="EMBL" id="FM211192">
    <property type="protein sequence ID" value="CAR71944.1"/>
    <property type="molecule type" value="Genomic_DNA"/>
</dbReference>
<dbReference type="SMR" id="B8ZSA8"/>
<dbReference type="KEGG" id="mlb:MLBr01848"/>
<dbReference type="HOGENOM" id="CLU_093315_2_0_11"/>
<dbReference type="Proteomes" id="UP000006900">
    <property type="component" value="Chromosome"/>
</dbReference>
<dbReference type="GO" id="GO:1990904">
    <property type="term" value="C:ribonucleoprotein complex"/>
    <property type="evidence" value="ECO:0007669"/>
    <property type="project" value="UniProtKB-KW"/>
</dbReference>
<dbReference type="GO" id="GO:0005840">
    <property type="term" value="C:ribosome"/>
    <property type="evidence" value="ECO:0007669"/>
    <property type="project" value="UniProtKB-KW"/>
</dbReference>
<dbReference type="GO" id="GO:0019843">
    <property type="term" value="F:rRNA binding"/>
    <property type="evidence" value="ECO:0007669"/>
    <property type="project" value="UniProtKB-UniRule"/>
</dbReference>
<dbReference type="GO" id="GO:0003735">
    <property type="term" value="F:structural constituent of ribosome"/>
    <property type="evidence" value="ECO:0007669"/>
    <property type="project" value="InterPro"/>
</dbReference>
<dbReference type="GO" id="GO:0006412">
    <property type="term" value="P:translation"/>
    <property type="evidence" value="ECO:0007669"/>
    <property type="project" value="UniProtKB-UniRule"/>
</dbReference>
<dbReference type="CDD" id="cd06089">
    <property type="entry name" value="KOW_RPL26"/>
    <property type="match status" value="1"/>
</dbReference>
<dbReference type="FunFam" id="2.30.30.30:FF:000004">
    <property type="entry name" value="50S ribosomal protein L24"/>
    <property type="match status" value="1"/>
</dbReference>
<dbReference type="Gene3D" id="2.30.30.30">
    <property type="match status" value="1"/>
</dbReference>
<dbReference type="HAMAP" id="MF_01326_B">
    <property type="entry name" value="Ribosomal_uL24_B"/>
    <property type="match status" value="1"/>
</dbReference>
<dbReference type="InterPro" id="IPR005824">
    <property type="entry name" value="KOW"/>
</dbReference>
<dbReference type="InterPro" id="IPR014722">
    <property type="entry name" value="Rib_uL2_dom2"/>
</dbReference>
<dbReference type="InterPro" id="IPR003256">
    <property type="entry name" value="Ribosomal_uL24"/>
</dbReference>
<dbReference type="InterPro" id="IPR005825">
    <property type="entry name" value="Ribosomal_uL24_CS"/>
</dbReference>
<dbReference type="InterPro" id="IPR041988">
    <property type="entry name" value="Ribosomal_uL24_KOW"/>
</dbReference>
<dbReference type="InterPro" id="IPR008991">
    <property type="entry name" value="Translation_prot_SH3-like_sf"/>
</dbReference>
<dbReference type="NCBIfam" id="TIGR01079">
    <property type="entry name" value="rplX_bact"/>
    <property type="match status" value="1"/>
</dbReference>
<dbReference type="PANTHER" id="PTHR12903">
    <property type="entry name" value="MITOCHONDRIAL RIBOSOMAL PROTEIN L24"/>
    <property type="match status" value="1"/>
</dbReference>
<dbReference type="Pfam" id="PF00467">
    <property type="entry name" value="KOW"/>
    <property type="match status" value="1"/>
</dbReference>
<dbReference type="Pfam" id="PF17136">
    <property type="entry name" value="ribosomal_L24"/>
    <property type="match status" value="1"/>
</dbReference>
<dbReference type="SMART" id="SM00739">
    <property type="entry name" value="KOW"/>
    <property type="match status" value="1"/>
</dbReference>
<dbReference type="SUPFAM" id="SSF50104">
    <property type="entry name" value="Translation proteins SH3-like domain"/>
    <property type="match status" value="1"/>
</dbReference>
<dbReference type="PROSITE" id="PS01108">
    <property type="entry name" value="RIBOSOMAL_L24"/>
    <property type="match status" value="1"/>
</dbReference>
<accession>B8ZSA8</accession>
<reference key="1">
    <citation type="journal article" date="2009" name="Nat. Genet.">
        <title>Comparative genomic and phylogeographic analysis of Mycobacterium leprae.</title>
        <authorList>
            <person name="Monot M."/>
            <person name="Honore N."/>
            <person name="Garnier T."/>
            <person name="Zidane N."/>
            <person name="Sherafi D."/>
            <person name="Paniz-Mondolfi A."/>
            <person name="Matsuoka M."/>
            <person name="Taylor G.M."/>
            <person name="Donoghue H.D."/>
            <person name="Bouwman A."/>
            <person name="Mays S."/>
            <person name="Watson C."/>
            <person name="Lockwood D."/>
            <person name="Khamispour A."/>
            <person name="Dowlati Y."/>
            <person name="Jianping S."/>
            <person name="Rea T.H."/>
            <person name="Vera-Cabrera L."/>
            <person name="Stefani M.M."/>
            <person name="Banu S."/>
            <person name="Macdonald M."/>
            <person name="Sapkota B.R."/>
            <person name="Spencer J.S."/>
            <person name="Thomas J."/>
            <person name="Harshman K."/>
            <person name="Singh P."/>
            <person name="Busso P."/>
            <person name="Gattiker A."/>
            <person name="Rougemont J."/>
            <person name="Brennan P.J."/>
            <person name="Cole S.T."/>
        </authorList>
    </citation>
    <scope>NUCLEOTIDE SEQUENCE [LARGE SCALE GENOMIC DNA]</scope>
    <source>
        <strain>Br4923</strain>
    </source>
</reference>